<feature type="chain" id="PRO_0000160855" description="L-threonine 3-dehydrogenase">
    <location>
        <begin position="1"/>
        <end position="341"/>
    </location>
</feature>
<feature type="active site" description="Charge relay system" evidence="1">
    <location>
        <position position="40"/>
    </location>
</feature>
<feature type="active site" description="Charge relay system" evidence="1">
    <location>
        <position position="43"/>
    </location>
</feature>
<feature type="binding site" evidence="1">
    <location>
        <position position="38"/>
    </location>
    <ligand>
        <name>Zn(2+)</name>
        <dbReference type="ChEBI" id="CHEBI:29105"/>
        <label>1</label>
        <note>catalytic</note>
    </ligand>
</feature>
<feature type="binding site" evidence="1">
    <location>
        <position position="63"/>
    </location>
    <ligand>
        <name>Zn(2+)</name>
        <dbReference type="ChEBI" id="CHEBI:29105"/>
        <label>1</label>
        <note>catalytic</note>
    </ligand>
</feature>
<feature type="binding site" evidence="1">
    <location>
        <position position="64"/>
    </location>
    <ligand>
        <name>Zn(2+)</name>
        <dbReference type="ChEBI" id="CHEBI:29105"/>
        <label>1</label>
        <note>catalytic</note>
    </ligand>
</feature>
<feature type="binding site" evidence="1">
    <location>
        <position position="93"/>
    </location>
    <ligand>
        <name>Zn(2+)</name>
        <dbReference type="ChEBI" id="CHEBI:29105"/>
        <label>2</label>
    </ligand>
</feature>
<feature type="binding site" evidence="1">
    <location>
        <position position="96"/>
    </location>
    <ligand>
        <name>Zn(2+)</name>
        <dbReference type="ChEBI" id="CHEBI:29105"/>
        <label>2</label>
    </ligand>
</feature>
<feature type="binding site" evidence="1">
    <location>
        <position position="99"/>
    </location>
    <ligand>
        <name>Zn(2+)</name>
        <dbReference type="ChEBI" id="CHEBI:29105"/>
        <label>2</label>
    </ligand>
</feature>
<feature type="binding site" evidence="1">
    <location>
        <position position="107"/>
    </location>
    <ligand>
        <name>Zn(2+)</name>
        <dbReference type="ChEBI" id="CHEBI:29105"/>
        <label>2</label>
    </ligand>
</feature>
<feature type="binding site" evidence="1">
    <location>
        <position position="175"/>
    </location>
    <ligand>
        <name>NAD(+)</name>
        <dbReference type="ChEBI" id="CHEBI:57540"/>
    </ligand>
</feature>
<feature type="binding site" evidence="1">
    <location>
        <position position="195"/>
    </location>
    <ligand>
        <name>NAD(+)</name>
        <dbReference type="ChEBI" id="CHEBI:57540"/>
    </ligand>
</feature>
<feature type="binding site" evidence="1">
    <location>
        <position position="200"/>
    </location>
    <ligand>
        <name>NAD(+)</name>
        <dbReference type="ChEBI" id="CHEBI:57540"/>
    </ligand>
</feature>
<feature type="binding site" evidence="1">
    <location>
        <begin position="262"/>
        <end position="264"/>
    </location>
    <ligand>
        <name>NAD(+)</name>
        <dbReference type="ChEBI" id="CHEBI:57540"/>
    </ligand>
</feature>
<feature type="binding site" evidence="1">
    <location>
        <begin position="286"/>
        <end position="287"/>
    </location>
    <ligand>
        <name>NAD(+)</name>
        <dbReference type="ChEBI" id="CHEBI:57540"/>
    </ligand>
</feature>
<feature type="site" description="Important for catalytic activity for the proton relay mechanism but does not participate directly in the coordination of zinc atom" evidence="1">
    <location>
        <position position="148"/>
    </location>
</feature>
<protein>
    <recommendedName>
        <fullName evidence="1">L-threonine 3-dehydrogenase</fullName>
        <shortName evidence="1">TDH</shortName>
        <ecNumber evidence="1">1.1.1.103</ecNumber>
    </recommendedName>
</protein>
<organism>
    <name type="scientific">Salmonella typhimurium (strain LT2 / SGSC1412 / ATCC 700720)</name>
    <dbReference type="NCBI Taxonomy" id="99287"/>
    <lineage>
        <taxon>Bacteria</taxon>
        <taxon>Pseudomonadati</taxon>
        <taxon>Pseudomonadota</taxon>
        <taxon>Gammaproteobacteria</taxon>
        <taxon>Enterobacterales</taxon>
        <taxon>Enterobacteriaceae</taxon>
        <taxon>Salmonella</taxon>
    </lineage>
</organism>
<name>TDH_SALTY</name>
<reference key="1">
    <citation type="journal article" date="2001" name="Nature">
        <title>Complete genome sequence of Salmonella enterica serovar Typhimurium LT2.</title>
        <authorList>
            <person name="McClelland M."/>
            <person name="Sanderson K.E."/>
            <person name="Spieth J."/>
            <person name="Clifton S.W."/>
            <person name="Latreille P."/>
            <person name="Courtney L."/>
            <person name="Porwollik S."/>
            <person name="Ali J."/>
            <person name="Dante M."/>
            <person name="Du F."/>
            <person name="Hou S."/>
            <person name="Layman D."/>
            <person name="Leonard S."/>
            <person name="Nguyen C."/>
            <person name="Scott K."/>
            <person name="Holmes A."/>
            <person name="Grewal N."/>
            <person name="Mulvaney E."/>
            <person name="Ryan E."/>
            <person name="Sun H."/>
            <person name="Florea L."/>
            <person name="Miller W."/>
            <person name="Stoneking T."/>
            <person name="Nhan M."/>
            <person name="Waterston R."/>
            <person name="Wilson R.K."/>
        </authorList>
    </citation>
    <scope>NUCLEOTIDE SEQUENCE [LARGE SCALE GENOMIC DNA]</scope>
    <source>
        <strain>LT2 / SGSC1412 / ATCC 700720</strain>
    </source>
</reference>
<evidence type="ECO:0000255" key="1">
    <source>
        <dbReference type="HAMAP-Rule" id="MF_00627"/>
    </source>
</evidence>
<accession>Q8ZL52</accession>
<gene>
    <name evidence="1" type="primary">tdh</name>
    <name type="ordered locus">STM3708</name>
</gene>
<comment type="function">
    <text evidence="1">Catalyzes the NAD(+)-dependent oxidation of L-threonine to 2-amino-3-ketobutyrate.</text>
</comment>
<comment type="catalytic activity">
    <reaction evidence="1">
        <text>L-threonine + NAD(+) = (2S)-2-amino-3-oxobutanoate + NADH + H(+)</text>
        <dbReference type="Rhea" id="RHEA:13161"/>
        <dbReference type="ChEBI" id="CHEBI:15378"/>
        <dbReference type="ChEBI" id="CHEBI:57540"/>
        <dbReference type="ChEBI" id="CHEBI:57926"/>
        <dbReference type="ChEBI" id="CHEBI:57945"/>
        <dbReference type="ChEBI" id="CHEBI:78948"/>
        <dbReference type="EC" id="1.1.1.103"/>
    </reaction>
</comment>
<comment type="cofactor">
    <cofactor evidence="1">
        <name>Zn(2+)</name>
        <dbReference type="ChEBI" id="CHEBI:29105"/>
    </cofactor>
    <text evidence="1">Binds 2 Zn(2+) ions per subunit.</text>
</comment>
<comment type="pathway">
    <text evidence="1">Amino-acid degradation; L-threonine degradation via oxydo-reductase pathway; glycine from L-threonine: step 1/2.</text>
</comment>
<comment type="subunit">
    <text evidence="1">Homotetramer.</text>
</comment>
<comment type="subcellular location">
    <subcellularLocation>
        <location evidence="1">Cytoplasm</location>
    </subcellularLocation>
</comment>
<comment type="similarity">
    <text evidence="1">Belongs to the zinc-containing alcohol dehydrogenase family.</text>
</comment>
<dbReference type="EC" id="1.1.1.103" evidence="1"/>
<dbReference type="EMBL" id="AE006468">
    <property type="protein sequence ID" value="AAL22567.1"/>
    <property type="molecule type" value="Genomic_DNA"/>
</dbReference>
<dbReference type="RefSeq" id="NP_462608.1">
    <property type="nucleotide sequence ID" value="NC_003197.2"/>
</dbReference>
<dbReference type="RefSeq" id="WP_000645990.1">
    <property type="nucleotide sequence ID" value="NC_003197.2"/>
</dbReference>
<dbReference type="SMR" id="Q8ZL52"/>
<dbReference type="STRING" id="99287.STM3708"/>
<dbReference type="PaxDb" id="99287-STM3708"/>
<dbReference type="GeneID" id="1255232"/>
<dbReference type="KEGG" id="stm:STM3708"/>
<dbReference type="PATRIC" id="fig|99287.12.peg.3922"/>
<dbReference type="HOGENOM" id="CLU_026673_11_0_6"/>
<dbReference type="OMA" id="FETWYAM"/>
<dbReference type="PhylomeDB" id="Q8ZL52"/>
<dbReference type="BioCyc" id="SENT99287:STM3708-MONOMER"/>
<dbReference type="UniPathway" id="UPA00046">
    <property type="reaction ID" value="UER00505"/>
</dbReference>
<dbReference type="Proteomes" id="UP000001014">
    <property type="component" value="Chromosome"/>
</dbReference>
<dbReference type="GO" id="GO:0005737">
    <property type="term" value="C:cytoplasm"/>
    <property type="evidence" value="ECO:0007669"/>
    <property type="project" value="UniProtKB-SubCell"/>
</dbReference>
<dbReference type="GO" id="GO:0008743">
    <property type="term" value="F:L-threonine 3-dehydrogenase activity"/>
    <property type="evidence" value="ECO:0007669"/>
    <property type="project" value="UniProtKB-UniRule"/>
</dbReference>
<dbReference type="GO" id="GO:0008270">
    <property type="term" value="F:zinc ion binding"/>
    <property type="evidence" value="ECO:0007669"/>
    <property type="project" value="UniProtKB-UniRule"/>
</dbReference>
<dbReference type="GO" id="GO:0019518">
    <property type="term" value="P:L-threonine catabolic process to glycine"/>
    <property type="evidence" value="ECO:0007669"/>
    <property type="project" value="UniProtKB-UniPathway"/>
</dbReference>
<dbReference type="FunFam" id="3.40.50.720:FF:000059">
    <property type="entry name" value="L-threonine 3-dehydrogenase"/>
    <property type="match status" value="1"/>
</dbReference>
<dbReference type="Gene3D" id="3.90.180.10">
    <property type="entry name" value="Medium-chain alcohol dehydrogenases, catalytic domain"/>
    <property type="match status" value="1"/>
</dbReference>
<dbReference type="Gene3D" id="3.40.50.720">
    <property type="entry name" value="NAD(P)-binding Rossmann-like Domain"/>
    <property type="match status" value="1"/>
</dbReference>
<dbReference type="HAMAP" id="MF_00627">
    <property type="entry name" value="Thr_dehydrog"/>
    <property type="match status" value="1"/>
</dbReference>
<dbReference type="InterPro" id="IPR013149">
    <property type="entry name" value="ADH-like_C"/>
</dbReference>
<dbReference type="InterPro" id="IPR013154">
    <property type="entry name" value="ADH-like_N"/>
</dbReference>
<dbReference type="InterPro" id="IPR002328">
    <property type="entry name" value="ADH_Zn_CS"/>
</dbReference>
<dbReference type="InterPro" id="IPR011032">
    <property type="entry name" value="GroES-like_sf"/>
</dbReference>
<dbReference type="InterPro" id="IPR004627">
    <property type="entry name" value="L-Threonine_3-DHase"/>
</dbReference>
<dbReference type="InterPro" id="IPR036291">
    <property type="entry name" value="NAD(P)-bd_dom_sf"/>
</dbReference>
<dbReference type="InterPro" id="IPR020843">
    <property type="entry name" value="PKS_ER"/>
</dbReference>
<dbReference type="InterPro" id="IPR050129">
    <property type="entry name" value="Zn_alcohol_dh"/>
</dbReference>
<dbReference type="NCBIfam" id="NF003808">
    <property type="entry name" value="PRK05396.1"/>
    <property type="match status" value="1"/>
</dbReference>
<dbReference type="NCBIfam" id="TIGR00692">
    <property type="entry name" value="tdh"/>
    <property type="match status" value="1"/>
</dbReference>
<dbReference type="PANTHER" id="PTHR43401">
    <property type="entry name" value="L-THREONINE 3-DEHYDROGENASE"/>
    <property type="match status" value="1"/>
</dbReference>
<dbReference type="PANTHER" id="PTHR43401:SF2">
    <property type="entry name" value="L-THREONINE 3-DEHYDROGENASE"/>
    <property type="match status" value="1"/>
</dbReference>
<dbReference type="Pfam" id="PF08240">
    <property type="entry name" value="ADH_N"/>
    <property type="match status" value="1"/>
</dbReference>
<dbReference type="Pfam" id="PF00107">
    <property type="entry name" value="ADH_zinc_N"/>
    <property type="match status" value="1"/>
</dbReference>
<dbReference type="SMART" id="SM00829">
    <property type="entry name" value="PKS_ER"/>
    <property type="match status" value="1"/>
</dbReference>
<dbReference type="SUPFAM" id="SSF50129">
    <property type="entry name" value="GroES-like"/>
    <property type="match status" value="1"/>
</dbReference>
<dbReference type="SUPFAM" id="SSF51735">
    <property type="entry name" value="NAD(P)-binding Rossmann-fold domains"/>
    <property type="match status" value="1"/>
</dbReference>
<dbReference type="PROSITE" id="PS00059">
    <property type="entry name" value="ADH_ZINC"/>
    <property type="match status" value="1"/>
</dbReference>
<sequence length="341" mass="37213">MKALSKLKAEEGIWMTDVPEPEVGHNDLLIKIRKTAICGTDVHIYNWDDWSQKTIPVPMVVGHEYVGEVVGIGQEVKGFKIGDRVSGEGHITCGHCRNCRGGRTHLCRNTTGVGVNRPGCFAEYLVIPAFNAFKIPDNISDDLASIFDPFGNAVHTALSFDLVGEDVLVSGAGPIGVMAAAVAKHVGARHVVITDVNEYRLELARKMGVTRAVNVAKESLNDVMAELGMTEGFDVGLEMSGAPPAFRTMLDTMNHGGRIAMLGIPPSDMSIDWTKVIFKGLFIKGIYGREMFETWYKMAALIQSGLDLSPIITHRFSIDDFQKGFDAMRSGQSGKVILSWD</sequence>
<proteinExistence type="inferred from homology"/>
<keyword id="KW-0963">Cytoplasm</keyword>
<keyword id="KW-0479">Metal-binding</keyword>
<keyword id="KW-0520">NAD</keyword>
<keyword id="KW-0560">Oxidoreductase</keyword>
<keyword id="KW-1185">Reference proteome</keyword>
<keyword id="KW-0862">Zinc</keyword>